<protein>
    <recommendedName>
        <fullName>T-complex protein 1 subunit zeta</fullName>
        <shortName>TCP-1-zeta</shortName>
        <ecNumber evidence="1">3.6.1.-</ecNumber>
    </recommendedName>
    <alternativeName>
        <fullName>CCT-zeta</fullName>
    </alternativeName>
    <alternativeName>
        <fullName>CCT-zeta-1</fullName>
    </alternativeName>
</protein>
<proteinExistence type="evidence at protein level"/>
<evidence type="ECO:0000250" key="1">
    <source>
        <dbReference type="UniProtKB" id="P40227"/>
    </source>
</evidence>
<evidence type="ECO:0000250" key="2">
    <source>
        <dbReference type="UniProtKB" id="P80317"/>
    </source>
</evidence>
<evidence type="ECO:0000305" key="3"/>
<organism>
    <name type="scientific">Bos taurus</name>
    <name type="common">Bovine</name>
    <dbReference type="NCBI Taxonomy" id="9913"/>
    <lineage>
        <taxon>Eukaryota</taxon>
        <taxon>Metazoa</taxon>
        <taxon>Chordata</taxon>
        <taxon>Craniata</taxon>
        <taxon>Vertebrata</taxon>
        <taxon>Euteleostomi</taxon>
        <taxon>Mammalia</taxon>
        <taxon>Eutheria</taxon>
        <taxon>Laurasiatheria</taxon>
        <taxon>Artiodactyla</taxon>
        <taxon>Ruminantia</taxon>
        <taxon>Pecora</taxon>
        <taxon>Bovidae</taxon>
        <taxon>Bovinae</taxon>
        <taxon>Bos</taxon>
    </lineage>
</organism>
<comment type="function">
    <text evidence="1">Component of the chaperonin-containing T-complex (TRiC), a molecular chaperone complex that assists the folding of actin, tubulin and other proteins upon ATP hydrolysis. The TRiC complex mediates the folding of WRAP53/TCAB1, thereby regulating telomere maintenance.</text>
</comment>
<comment type="catalytic activity">
    <reaction evidence="1">
        <text>ATP + H2O = ADP + phosphate + H(+)</text>
        <dbReference type="Rhea" id="RHEA:13065"/>
        <dbReference type="ChEBI" id="CHEBI:15377"/>
        <dbReference type="ChEBI" id="CHEBI:15378"/>
        <dbReference type="ChEBI" id="CHEBI:30616"/>
        <dbReference type="ChEBI" id="CHEBI:43474"/>
        <dbReference type="ChEBI" id="CHEBI:456216"/>
    </reaction>
</comment>
<comment type="subunit">
    <text evidence="1">Component of the chaperonin-containing T-complex (TRiC), a hexadecamer composed of two identical back-to-back stacked rings enclosing a protein folding chamber. Each ring is made up of eight different subunits: TCP1/CCT1, CCT2, CCT3, CCT4, CCT5, CCT6A/CCT6, CCT7, CCT8. Interacts with PACRG.</text>
</comment>
<comment type="subcellular location">
    <subcellularLocation>
        <location evidence="1">Cytoplasm</location>
    </subcellularLocation>
</comment>
<comment type="similarity">
    <text evidence="3">Belongs to the TCP-1 chaperonin family.</text>
</comment>
<sequence length="531" mass="57956">MAAVKTLNPKAEVARAQAALAVNISAARGLQDVLRTNLGPKGTMKMLVSGAGDIKLTKDGNVLLHEMQIQHPTASLIAKVATAQDDITGDGTTSNVLIIGELLKQADLYISEGLHPRIITEGFEAAKEKALQFLEQVKVSKEMDRETLIDVARTSLRTKVHAELADVLTEAVVDSILAIKKQDEPIDLFMVEIMEMKHKSETDTSLIRGLVLDHGARHPDMKKRVEDAYILTCNVSLEYEKTEVNSGFFYKSAEEREKLVKAERKFIEDRVKKIIELKKKVCGDSDKGFVVINQKGIDPFSLDALAKEGIIALRRAKRRNMERLTLACGGIALNSLDDLNPDCLGHAGLVYEYTLGEEKFTFIEKCNNPRSVTLLIKGPNKHTLTQIKDAIRDGLRAVKNAIDDGCVVPGAGAVEVAMAEALVKYKPSVKGRAQLGVQAFADALLIIPKVLAQNSGFDLQETLVKVQAEHSESGQLVGVDLNTGEPMVAAEAGIWDNYCVKKQLLHSCTVIATNILLVDEIMRAGMSSLKG</sequence>
<gene>
    <name type="primary">CCT6A</name>
</gene>
<reference key="1">
    <citation type="journal article" date="2005" name="BMC Genomics">
        <title>Characterization of 954 bovine full-CDS cDNA sequences.</title>
        <authorList>
            <person name="Harhay G.P."/>
            <person name="Sonstegard T.S."/>
            <person name="Keele J.W."/>
            <person name="Heaton M.P."/>
            <person name="Clawson M.L."/>
            <person name="Snelling W.M."/>
            <person name="Wiedmann R.T."/>
            <person name="Van Tassell C.P."/>
            <person name="Smith T.P.L."/>
        </authorList>
    </citation>
    <scope>NUCLEOTIDE SEQUENCE [LARGE SCALE MRNA]</scope>
</reference>
<reference key="2">
    <citation type="submission" date="2007-06" db="EMBL/GenBank/DDBJ databases">
        <authorList>
            <consortium name="NIH - Mammalian Gene Collection (MGC) project"/>
        </authorList>
    </citation>
    <scope>NUCLEOTIDE SEQUENCE [LARGE SCALE MRNA]</scope>
    <source>
        <strain>Hereford</strain>
        <tissue>Fetal liver</tissue>
    </source>
</reference>
<dbReference type="EC" id="3.6.1.-" evidence="1"/>
<dbReference type="EMBL" id="BT030538">
    <property type="protein sequence ID" value="ABQ12978.1"/>
    <property type="molecule type" value="mRNA"/>
</dbReference>
<dbReference type="EMBL" id="BC105191">
    <property type="protein sequence ID" value="AAI05192.1"/>
    <property type="molecule type" value="mRNA"/>
</dbReference>
<dbReference type="EMBL" id="BC142274">
    <property type="protein sequence ID" value="AAI42275.1"/>
    <property type="molecule type" value="mRNA"/>
</dbReference>
<dbReference type="RefSeq" id="NP_001029714.1">
    <property type="nucleotide sequence ID" value="NM_001034542.2"/>
</dbReference>
<dbReference type="PDB" id="3IYG">
    <property type="method" value="EM"/>
    <property type="chains" value="Z=9-525"/>
</dbReference>
<dbReference type="PDB" id="4B2T">
    <property type="method" value="X-ray"/>
    <property type="resolution" value="5.50 A"/>
    <property type="chains" value="Z/z=1-531"/>
</dbReference>
<dbReference type="PDBsum" id="3IYG"/>
<dbReference type="PDBsum" id="4B2T"/>
<dbReference type="EMDB" id="EMD-50664"/>
<dbReference type="SMR" id="Q3MHL7"/>
<dbReference type="BioGRID" id="178158">
    <property type="interactions" value="5"/>
</dbReference>
<dbReference type="CORUM" id="Q3MHL7"/>
<dbReference type="DIP" id="DIP-58623N"/>
<dbReference type="FunCoup" id="Q3MHL7">
    <property type="interactions" value="4079"/>
</dbReference>
<dbReference type="IntAct" id="Q3MHL7">
    <property type="interactions" value="2"/>
</dbReference>
<dbReference type="STRING" id="9913.ENSBTAP00000069251"/>
<dbReference type="PaxDb" id="9913-ENSBTAP00000010765"/>
<dbReference type="PeptideAtlas" id="Q3MHL7"/>
<dbReference type="Ensembl" id="ENSBTAT00000071259.1">
    <property type="protein sequence ID" value="ENSBTAP00000069251.1"/>
    <property type="gene ID" value="ENSBTAG00000008184.7"/>
</dbReference>
<dbReference type="GeneID" id="521540"/>
<dbReference type="KEGG" id="bta:521540"/>
<dbReference type="CTD" id="908"/>
<dbReference type="VEuPathDB" id="HostDB:ENSBTAG00000008184"/>
<dbReference type="VGNC" id="VGNC:97250">
    <property type="gene designation" value="CCT6A"/>
</dbReference>
<dbReference type="eggNOG" id="KOG0359">
    <property type="taxonomic scope" value="Eukaryota"/>
</dbReference>
<dbReference type="GeneTree" id="ENSGT00940000154631"/>
<dbReference type="InParanoid" id="Q3MHL7"/>
<dbReference type="OMA" id="LHPRIMT"/>
<dbReference type="OrthoDB" id="10052040at2759"/>
<dbReference type="BRENDA" id="3.6.4.B10">
    <property type="organism ID" value="908"/>
</dbReference>
<dbReference type="Reactome" id="R-BTA-390471">
    <property type="pathway name" value="Association of TriC/CCT with target proteins during biosynthesis"/>
</dbReference>
<dbReference type="Reactome" id="R-BTA-6814122">
    <property type="pathway name" value="Cooperation of PDCL (PhLP1) and TRiC/CCT in G-protein beta folding"/>
</dbReference>
<dbReference type="Reactome" id="R-BTA-9013418">
    <property type="pathway name" value="RHOBTB2 GTPase cycle"/>
</dbReference>
<dbReference type="EvolutionaryTrace" id="Q3MHL7"/>
<dbReference type="Proteomes" id="UP000009136">
    <property type="component" value="Chromosome 25"/>
</dbReference>
<dbReference type="Bgee" id="ENSBTAG00000008184">
    <property type="expression patterns" value="Expressed in conceptus and 104 other cell types or tissues"/>
</dbReference>
<dbReference type="GO" id="GO:0005832">
    <property type="term" value="C:chaperonin-containing T-complex"/>
    <property type="evidence" value="ECO:0000314"/>
    <property type="project" value="UniProtKB"/>
</dbReference>
<dbReference type="GO" id="GO:0005874">
    <property type="term" value="C:microtubule"/>
    <property type="evidence" value="ECO:0007669"/>
    <property type="project" value="Ensembl"/>
</dbReference>
<dbReference type="GO" id="GO:0005524">
    <property type="term" value="F:ATP binding"/>
    <property type="evidence" value="ECO:0007669"/>
    <property type="project" value="UniProtKB-KW"/>
</dbReference>
<dbReference type="GO" id="GO:0016887">
    <property type="term" value="F:ATP hydrolysis activity"/>
    <property type="evidence" value="ECO:0007669"/>
    <property type="project" value="InterPro"/>
</dbReference>
<dbReference type="GO" id="GO:0140662">
    <property type="term" value="F:ATP-dependent protein folding chaperone"/>
    <property type="evidence" value="ECO:0007669"/>
    <property type="project" value="InterPro"/>
</dbReference>
<dbReference type="GO" id="GO:0051082">
    <property type="term" value="F:unfolded protein binding"/>
    <property type="evidence" value="ECO:0000318"/>
    <property type="project" value="GO_Central"/>
</dbReference>
<dbReference type="GO" id="GO:0071987">
    <property type="term" value="F:WD40-repeat domain binding"/>
    <property type="evidence" value="ECO:0007669"/>
    <property type="project" value="Ensembl"/>
</dbReference>
<dbReference type="GO" id="GO:0051086">
    <property type="term" value="P:chaperone mediated protein folding independent of cofactor"/>
    <property type="evidence" value="ECO:0007669"/>
    <property type="project" value="Ensembl"/>
</dbReference>
<dbReference type="GO" id="GO:1904851">
    <property type="term" value="P:positive regulation of establishment of protein localization to telomere"/>
    <property type="evidence" value="ECO:0007669"/>
    <property type="project" value="Ensembl"/>
</dbReference>
<dbReference type="GO" id="GO:0032212">
    <property type="term" value="P:positive regulation of telomere maintenance via telomerase"/>
    <property type="evidence" value="ECO:0007669"/>
    <property type="project" value="Ensembl"/>
</dbReference>
<dbReference type="GO" id="GO:0006457">
    <property type="term" value="P:protein folding"/>
    <property type="evidence" value="ECO:0000318"/>
    <property type="project" value="GO_Central"/>
</dbReference>
<dbReference type="GO" id="GO:0050821">
    <property type="term" value="P:protein stabilization"/>
    <property type="evidence" value="ECO:0007669"/>
    <property type="project" value="Ensembl"/>
</dbReference>
<dbReference type="CDD" id="cd03342">
    <property type="entry name" value="TCP1_zeta"/>
    <property type="match status" value="1"/>
</dbReference>
<dbReference type="FunFam" id="3.30.260.10:FF:000029">
    <property type="entry name" value="Chaperonin containing TCP1 subunit 6B"/>
    <property type="match status" value="1"/>
</dbReference>
<dbReference type="FunFam" id="1.10.560.10:FF:000022">
    <property type="entry name" value="T-complex protein 1 subunit zeta"/>
    <property type="match status" value="2"/>
</dbReference>
<dbReference type="FunFam" id="3.30.260.10:FF:000017">
    <property type="entry name" value="T-complex protein 1 subunit zeta"/>
    <property type="match status" value="1"/>
</dbReference>
<dbReference type="FunFam" id="3.50.7.10:FF:000004">
    <property type="entry name" value="T-complex protein 1 subunit zeta"/>
    <property type="match status" value="1"/>
</dbReference>
<dbReference type="Gene3D" id="3.50.7.10">
    <property type="entry name" value="GroEL"/>
    <property type="match status" value="1"/>
</dbReference>
<dbReference type="Gene3D" id="1.10.560.10">
    <property type="entry name" value="GroEL-like equatorial domain"/>
    <property type="match status" value="1"/>
</dbReference>
<dbReference type="Gene3D" id="3.30.260.10">
    <property type="entry name" value="TCP-1-like chaperonin intermediate domain"/>
    <property type="match status" value="1"/>
</dbReference>
<dbReference type="InterPro" id="IPR012722">
    <property type="entry name" value="Chap_CCT_zeta"/>
</dbReference>
<dbReference type="InterPro" id="IPR017998">
    <property type="entry name" value="Chaperone_TCP-1"/>
</dbReference>
<dbReference type="InterPro" id="IPR002194">
    <property type="entry name" value="Chaperonin_TCP-1_CS"/>
</dbReference>
<dbReference type="InterPro" id="IPR002423">
    <property type="entry name" value="Cpn60/GroEL/TCP-1"/>
</dbReference>
<dbReference type="InterPro" id="IPR027409">
    <property type="entry name" value="GroEL-like_apical_dom_sf"/>
</dbReference>
<dbReference type="InterPro" id="IPR027413">
    <property type="entry name" value="GROEL-like_equatorial_sf"/>
</dbReference>
<dbReference type="InterPro" id="IPR027410">
    <property type="entry name" value="TCP-1-like_intermed_sf"/>
</dbReference>
<dbReference type="InterPro" id="IPR053374">
    <property type="entry name" value="TCP-1_chaperonin"/>
</dbReference>
<dbReference type="NCBIfam" id="TIGR02347">
    <property type="entry name" value="chap_CCT_zeta"/>
    <property type="match status" value="1"/>
</dbReference>
<dbReference type="NCBIfam" id="NF041083">
    <property type="entry name" value="thermosome_beta"/>
    <property type="match status" value="1"/>
</dbReference>
<dbReference type="PANTHER" id="PTHR11353">
    <property type="entry name" value="CHAPERONIN"/>
    <property type="match status" value="1"/>
</dbReference>
<dbReference type="Pfam" id="PF00118">
    <property type="entry name" value="Cpn60_TCP1"/>
    <property type="match status" value="1"/>
</dbReference>
<dbReference type="PRINTS" id="PR00304">
    <property type="entry name" value="TCOMPLEXTCP1"/>
</dbReference>
<dbReference type="SUPFAM" id="SSF52029">
    <property type="entry name" value="GroEL apical domain-like"/>
    <property type="match status" value="1"/>
</dbReference>
<dbReference type="SUPFAM" id="SSF48592">
    <property type="entry name" value="GroEL equatorial domain-like"/>
    <property type="match status" value="1"/>
</dbReference>
<dbReference type="SUPFAM" id="SSF54849">
    <property type="entry name" value="GroEL-intermediate domain like"/>
    <property type="match status" value="1"/>
</dbReference>
<dbReference type="PROSITE" id="PS00750">
    <property type="entry name" value="TCP1_1"/>
    <property type="match status" value="1"/>
</dbReference>
<dbReference type="PROSITE" id="PS00751">
    <property type="entry name" value="TCP1_2"/>
    <property type="match status" value="1"/>
</dbReference>
<dbReference type="PROSITE" id="PS00995">
    <property type="entry name" value="TCP1_3"/>
    <property type="match status" value="1"/>
</dbReference>
<accession>Q3MHL7</accession>
<accession>A5D9B9</accession>
<name>TCPZ_BOVIN</name>
<keyword id="KW-0002">3D-structure</keyword>
<keyword id="KW-0007">Acetylation</keyword>
<keyword id="KW-0067">ATP-binding</keyword>
<keyword id="KW-0143">Chaperone</keyword>
<keyword id="KW-0963">Cytoplasm</keyword>
<keyword id="KW-0378">Hydrolase</keyword>
<keyword id="KW-1017">Isopeptide bond</keyword>
<keyword id="KW-0460">Magnesium</keyword>
<keyword id="KW-0479">Metal-binding</keyword>
<keyword id="KW-0547">Nucleotide-binding</keyword>
<keyword id="KW-0597">Phosphoprotein</keyword>
<keyword id="KW-1185">Reference proteome</keyword>
<keyword id="KW-0832">Ubl conjugation</keyword>
<feature type="initiator methionine" description="Removed" evidence="1">
    <location>
        <position position="1"/>
    </location>
</feature>
<feature type="chain" id="PRO_0000236262" description="T-complex protein 1 subunit zeta">
    <location>
        <begin position="2"/>
        <end position="531"/>
    </location>
</feature>
<feature type="binding site" evidence="1">
    <location>
        <position position="39"/>
    </location>
    <ligand>
        <name>ADP</name>
        <dbReference type="ChEBI" id="CHEBI:456216"/>
    </ligand>
</feature>
<feature type="binding site" evidence="1">
    <location>
        <position position="39"/>
    </location>
    <ligand>
        <name>ATP</name>
        <dbReference type="ChEBI" id="CHEBI:30616"/>
    </ligand>
</feature>
<feature type="binding site" evidence="1">
    <location>
        <position position="90"/>
    </location>
    <ligand>
        <name>Mg(2+)</name>
        <dbReference type="ChEBI" id="CHEBI:18420"/>
    </ligand>
</feature>
<feature type="binding site" evidence="1">
    <location>
        <position position="91"/>
    </location>
    <ligand>
        <name>ADP</name>
        <dbReference type="ChEBI" id="CHEBI:456216"/>
    </ligand>
</feature>
<feature type="binding site" evidence="1">
    <location>
        <position position="91"/>
    </location>
    <ligand>
        <name>ATP</name>
        <dbReference type="ChEBI" id="CHEBI:30616"/>
    </ligand>
</feature>
<feature type="binding site" evidence="1">
    <location>
        <position position="92"/>
    </location>
    <ligand>
        <name>ADP</name>
        <dbReference type="ChEBI" id="CHEBI:456216"/>
    </ligand>
</feature>
<feature type="binding site" evidence="1">
    <location>
        <position position="92"/>
    </location>
    <ligand>
        <name>ATP</name>
        <dbReference type="ChEBI" id="CHEBI:30616"/>
    </ligand>
</feature>
<feature type="binding site" evidence="1">
    <location>
        <position position="93"/>
    </location>
    <ligand>
        <name>ADP</name>
        <dbReference type="ChEBI" id="CHEBI:456216"/>
    </ligand>
</feature>
<feature type="binding site" evidence="1">
    <location>
        <position position="93"/>
    </location>
    <ligand>
        <name>ATP</name>
        <dbReference type="ChEBI" id="CHEBI:30616"/>
    </ligand>
</feature>
<feature type="binding site" evidence="1">
    <location>
        <position position="94"/>
    </location>
    <ligand>
        <name>ADP</name>
        <dbReference type="ChEBI" id="CHEBI:456216"/>
    </ligand>
</feature>
<feature type="binding site" evidence="1">
    <location>
        <position position="158"/>
    </location>
    <ligand>
        <name>ADP</name>
        <dbReference type="ChEBI" id="CHEBI:456216"/>
    </ligand>
</feature>
<feature type="binding site" evidence="1">
    <location>
        <position position="159"/>
    </location>
    <ligand>
        <name>ADP</name>
        <dbReference type="ChEBI" id="CHEBI:456216"/>
    </ligand>
</feature>
<feature type="binding site" evidence="1">
    <location>
        <position position="411"/>
    </location>
    <ligand>
        <name>ADP</name>
        <dbReference type="ChEBI" id="CHEBI:456216"/>
    </ligand>
</feature>
<feature type="binding site" evidence="1">
    <location>
        <position position="411"/>
    </location>
    <ligand>
        <name>ATP</name>
        <dbReference type="ChEBI" id="CHEBI:30616"/>
    </ligand>
</feature>
<feature type="binding site" evidence="1">
    <location>
        <position position="412"/>
    </location>
    <ligand>
        <name>ATP</name>
        <dbReference type="ChEBI" id="CHEBI:30616"/>
    </ligand>
</feature>
<feature type="binding site" evidence="1">
    <location>
        <position position="496"/>
    </location>
    <ligand>
        <name>ADP</name>
        <dbReference type="ChEBI" id="CHEBI:456216"/>
    </ligand>
</feature>
<feature type="binding site" evidence="1">
    <location>
        <position position="496"/>
    </location>
    <ligand>
        <name>ATP</name>
        <dbReference type="ChEBI" id="CHEBI:30616"/>
    </ligand>
</feature>
<feature type="binding site" evidence="1">
    <location>
        <position position="501"/>
    </location>
    <ligand>
        <name>ATP</name>
        <dbReference type="ChEBI" id="CHEBI:30616"/>
    </ligand>
</feature>
<feature type="modified residue" description="N-acetylalanine" evidence="1">
    <location>
        <position position="2"/>
    </location>
</feature>
<feature type="modified residue" description="N6-acetyllysine" evidence="2">
    <location>
        <position position="5"/>
    </location>
</feature>
<feature type="modified residue" description="N6-acetyllysine" evidence="1">
    <location>
        <position position="199"/>
    </location>
</feature>
<feature type="modified residue" description="Phosphoserine" evidence="1">
    <location>
        <position position="205"/>
    </location>
</feature>
<feature type="modified residue" description="N6-acetyllysine" evidence="2">
    <location>
        <position position="287"/>
    </location>
</feature>
<feature type="modified residue" description="N6-acetyllysine" evidence="1">
    <location>
        <position position="365"/>
    </location>
</feature>
<feature type="modified residue" description="N6-acetyllysine" evidence="1">
    <location>
        <position position="377"/>
    </location>
</feature>
<feature type="modified residue" description="N6-acetyllysine" evidence="1">
    <location>
        <position position="388"/>
    </location>
</feature>
<feature type="cross-link" description="Glycyl lysine isopeptide (Lys-Gly) (interchain with G-Cter in SUMO2)" evidence="1">
    <location>
        <position position="251"/>
    </location>
</feature>